<dbReference type="EC" id="5.3.3.2" evidence="1"/>
<dbReference type="EMBL" id="M87280">
    <property type="protein sequence ID" value="AAA64978.1"/>
    <property type="molecule type" value="Genomic_DNA"/>
</dbReference>
<dbReference type="PIR" id="S52979">
    <property type="entry name" value="S52979"/>
</dbReference>
<dbReference type="SMR" id="Q01335"/>
<dbReference type="GO" id="GO:0005737">
    <property type="term" value="C:cytoplasm"/>
    <property type="evidence" value="ECO:0007669"/>
    <property type="project" value="UniProtKB-SubCell"/>
</dbReference>
<dbReference type="GO" id="GO:0010181">
    <property type="term" value="F:FMN binding"/>
    <property type="evidence" value="ECO:0007669"/>
    <property type="project" value="UniProtKB-UniRule"/>
</dbReference>
<dbReference type="GO" id="GO:0004452">
    <property type="term" value="F:isopentenyl-diphosphate delta-isomerase activity"/>
    <property type="evidence" value="ECO:0007669"/>
    <property type="project" value="UniProtKB-UniRule"/>
</dbReference>
<dbReference type="GO" id="GO:0000287">
    <property type="term" value="F:magnesium ion binding"/>
    <property type="evidence" value="ECO:0007669"/>
    <property type="project" value="UniProtKB-UniRule"/>
</dbReference>
<dbReference type="GO" id="GO:0070402">
    <property type="term" value="F:NADPH binding"/>
    <property type="evidence" value="ECO:0007669"/>
    <property type="project" value="UniProtKB-UniRule"/>
</dbReference>
<dbReference type="GO" id="GO:0016491">
    <property type="term" value="F:oxidoreductase activity"/>
    <property type="evidence" value="ECO:0007669"/>
    <property type="project" value="InterPro"/>
</dbReference>
<dbReference type="GO" id="GO:0008299">
    <property type="term" value="P:isoprenoid biosynthetic process"/>
    <property type="evidence" value="ECO:0007669"/>
    <property type="project" value="UniProtKB-UniRule"/>
</dbReference>
<dbReference type="CDD" id="cd02811">
    <property type="entry name" value="IDI-2_FMN"/>
    <property type="match status" value="1"/>
</dbReference>
<dbReference type="Gene3D" id="3.20.20.70">
    <property type="entry name" value="Aldolase class I"/>
    <property type="match status" value="1"/>
</dbReference>
<dbReference type="HAMAP" id="MF_00354">
    <property type="entry name" value="Idi_2"/>
    <property type="match status" value="1"/>
</dbReference>
<dbReference type="InterPro" id="IPR013785">
    <property type="entry name" value="Aldolase_TIM"/>
</dbReference>
<dbReference type="InterPro" id="IPR000262">
    <property type="entry name" value="FMN-dep_DH"/>
</dbReference>
<dbReference type="InterPro" id="IPR011179">
    <property type="entry name" value="IPdP_isomerase"/>
</dbReference>
<dbReference type="NCBIfam" id="TIGR02151">
    <property type="entry name" value="IPP_isom_2"/>
    <property type="match status" value="1"/>
</dbReference>
<dbReference type="PANTHER" id="PTHR43665">
    <property type="entry name" value="ISOPENTENYL-DIPHOSPHATE DELTA-ISOMERASE"/>
    <property type="match status" value="1"/>
</dbReference>
<dbReference type="PANTHER" id="PTHR43665:SF1">
    <property type="entry name" value="ISOPENTENYL-DIPHOSPHATE DELTA-ISOMERASE"/>
    <property type="match status" value="1"/>
</dbReference>
<dbReference type="Pfam" id="PF01070">
    <property type="entry name" value="FMN_dh"/>
    <property type="match status" value="1"/>
</dbReference>
<dbReference type="PIRSF" id="PIRSF003314">
    <property type="entry name" value="IPP_isomerase"/>
    <property type="match status" value="1"/>
</dbReference>
<dbReference type="SMART" id="SM01240">
    <property type="entry name" value="IMPDH"/>
    <property type="match status" value="1"/>
</dbReference>
<dbReference type="SUPFAM" id="SSF51395">
    <property type="entry name" value="FMN-linked oxidoreductases"/>
    <property type="match status" value="1"/>
</dbReference>
<sequence>MKDERLVQRKNDHLDIVLDPRRAVTQASAGFERWRFTHCALPELNFSDITLETTFLNRQLQAPLLISSMTGGVERSRHINRHLAEAAQVLKIAMGVGSQRVAIESDAGLGLDKTLRQLAPDVPLLANLGAAQLTGRKGIDYARRAVEMIEADALIVHLNPLQEALQPGGDRDWRGRLAAIETLVRELPVPLVVKEVGAGISRTVAGQLIDAGVTVIDVAGAGGTSWAAVEGERAATEQQRSVANVFADWGIPTAEALVDIAEAWPQMPLIASGGIKNGVDAAKALRLGACMVGQAAAVLGSAGVSTEKVIDHFNVIIEQLRVACFCTGSRSLSDLKQADIRYVRDTP</sequence>
<reference key="1">
    <citation type="journal article" date="1994" name="Mol. Gen. Genet.">
        <title>Functional assignment of Erwinia herbicola Eho10 carotenoid genes expressed in Escherichia coli.</title>
        <authorList>
            <person name="Hundle B."/>
            <person name="Alberti M."/>
            <person name="Nievelstein V."/>
            <person name="Beyer P."/>
            <person name="Kleinig H."/>
            <person name="Armstrong G.A."/>
            <person name="Burke D.H."/>
            <person name="Hearst J.E."/>
        </authorList>
    </citation>
    <scope>NUCLEOTIDE SEQUENCE [GENOMIC DNA]</scope>
    <source>
        <strain>ATCC 39368 / Eho10</strain>
    </source>
</reference>
<gene>
    <name evidence="1" type="primary">fni</name>
</gene>
<proteinExistence type="inferred from homology"/>
<keyword id="KW-0963">Cytoplasm</keyword>
<keyword id="KW-0285">Flavoprotein</keyword>
<keyword id="KW-0288">FMN</keyword>
<keyword id="KW-0413">Isomerase</keyword>
<keyword id="KW-0414">Isoprene biosynthesis</keyword>
<keyword id="KW-0460">Magnesium</keyword>
<keyword id="KW-0479">Metal-binding</keyword>
<keyword id="KW-0521">NADP</keyword>
<comment type="function">
    <text evidence="1">Involved in the biosynthesis of isoprenoids. Catalyzes the 1,3-allylic rearrangement of the homoallylic substrate isopentenyl (IPP) to its allylic isomer, dimethylallyl diphosphate (DMAPP).</text>
</comment>
<comment type="catalytic activity">
    <reaction evidence="1">
        <text>isopentenyl diphosphate = dimethylallyl diphosphate</text>
        <dbReference type="Rhea" id="RHEA:23284"/>
        <dbReference type="ChEBI" id="CHEBI:57623"/>
        <dbReference type="ChEBI" id="CHEBI:128769"/>
        <dbReference type="EC" id="5.3.3.2"/>
    </reaction>
</comment>
<comment type="cofactor">
    <cofactor evidence="1">
        <name>FMN</name>
        <dbReference type="ChEBI" id="CHEBI:58210"/>
    </cofactor>
</comment>
<comment type="cofactor">
    <cofactor evidence="1">
        <name>NADPH</name>
        <dbReference type="ChEBI" id="CHEBI:57783"/>
    </cofactor>
</comment>
<comment type="cofactor">
    <cofactor evidence="1">
        <name>Mg(2+)</name>
        <dbReference type="ChEBI" id="CHEBI:18420"/>
    </cofactor>
</comment>
<comment type="subunit">
    <text evidence="1">Homooctamer. Dimer of tetramers.</text>
</comment>
<comment type="subcellular location">
    <subcellularLocation>
        <location evidence="1">Cytoplasm</location>
    </subcellularLocation>
</comment>
<comment type="similarity">
    <text evidence="1">Belongs to the IPP isomerase type 2 family.</text>
</comment>
<name>IDI2_PSEVU</name>
<organism>
    <name type="scientific">Pseudescherichia vulneris</name>
    <name type="common">Escherichia vulneris</name>
    <dbReference type="NCBI Taxonomy" id="566"/>
    <lineage>
        <taxon>Bacteria</taxon>
        <taxon>Pseudomonadati</taxon>
        <taxon>Pseudomonadota</taxon>
        <taxon>Gammaproteobacteria</taxon>
        <taxon>Enterobacterales</taxon>
        <taxon>Enterobacteriaceae</taxon>
        <taxon>Pseudescherichia</taxon>
    </lineage>
</organism>
<evidence type="ECO:0000255" key="1">
    <source>
        <dbReference type="HAMAP-Rule" id="MF_00354"/>
    </source>
</evidence>
<protein>
    <recommendedName>
        <fullName evidence="1">Isopentenyl-diphosphate delta-isomerase</fullName>
        <shortName evidence="1">IPP isomerase</shortName>
        <ecNumber evidence="1">5.3.3.2</ecNumber>
    </recommendedName>
    <alternativeName>
        <fullName evidence="1">Isopentenyl diphosphate:dimethylallyl diphosphate isomerase</fullName>
    </alternativeName>
    <alternativeName>
        <fullName evidence="1">Isopentenyl pyrophosphate isomerase</fullName>
    </alternativeName>
    <alternativeName>
        <fullName evidence="1">Type 2 isopentenyl diphosphate isomerase</fullName>
        <shortName evidence="1">IDI-2</shortName>
    </alternativeName>
</protein>
<accession>Q01335</accession>
<feature type="chain" id="PRO_0000134408" description="Isopentenyl-diphosphate delta-isomerase">
    <location>
        <begin position="1"/>
        <end position="347"/>
    </location>
</feature>
<feature type="binding site" evidence="1">
    <location>
        <begin position="9"/>
        <end position="10"/>
    </location>
    <ligand>
        <name>substrate</name>
    </ligand>
</feature>
<feature type="binding site" evidence="1">
    <location>
        <position position="67"/>
    </location>
    <ligand>
        <name>FMN</name>
        <dbReference type="ChEBI" id="CHEBI:58210"/>
    </ligand>
</feature>
<feature type="binding site" evidence="1">
    <location>
        <begin position="68"/>
        <end position="70"/>
    </location>
    <ligand>
        <name>FMN</name>
        <dbReference type="ChEBI" id="CHEBI:58210"/>
    </ligand>
</feature>
<feature type="binding site" evidence="1">
    <location>
        <begin position="98"/>
        <end position="100"/>
    </location>
    <ligand>
        <name>substrate</name>
    </ligand>
</feature>
<feature type="binding site" evidence="1">
    <location>
        <position position="98"/>
    </location>
    <ligand>
        <name>FMN</name>
        <dbReference type="ChEBI" id="CHEBI:58210"/>
    </ligand>
</feature>
<feature type="binding site" evidence="1">
    <location>
        <position position="127"/>
    </location>
    <ligand>
        <name>FMN</name>
        <dbReference type="ChEBI" id="CHEBI:58210"/>
    </ligand>
</feature>
<feature type="binding site" evidence="1">
    <location>
        <position position="162"/>
    </location>
    <ligand>
        <name>substrate</name>
    </ligand>
</feature>
<feature type="binding site" evidence="1">
    <location>
        <position position="163"/>
    </location>
    <ligand>
        <name>Mg(2+)</name>
        <dbReference type="ChEBI" id="CHEBI:18420"/>
    </ligand>
</feature>
<feature type="binding site" evidence="1">
    <location>
        <position position="194"/>
    </location>
    <ligand>
        <name>FMN</name>
        <dbReference type="ChEBI" id="CHEBI:58210"/>
    </ligand>
</feature>
<feature type="binding site" evidence="1">
    <location>
        <position position="224"/>
    </location>
    <ligand>
        <name>FMN</name>
        <dbReference type="ChEBI" id="CHEBI:58210"/>
    </ligand>
</feature>
<feature type="binding site" evidence="1">
    <location>
        <begin position="274"/>
        <end position="276"/>
    </location>
    <ligand>
        <name>FMN</name>
        <dbReference type="ChEBI" id="CHEBI:58210"/>
    </ligand>
</feature>
<feature type="binding site" evidence="1">
    <location>
        <begin position="295"/>
        <end position="296"/>
    </location>
    <ligand>
        <name>FMN</name>
        <dbReference type="ChEBI" id="CHEBI:58210"/>
    </ligand>
</feature>